<dbReference type="EC" id="2.7.1.148" evidence="1"/>
<dbReference type="EMBL" id="FM200053">
    <property type="protein sequence ID" value="CAR59174.1"/>
    <property type="molecule type" value="Genomic_DNA"/>
</dbReference>
<dbReference type="SMR" id="B5BI72"/>
<dbReference type="KEGG" id="sek:SSPA1021"/>
<dbReference type="HOGENOM" id="CLU_053057_3_0_6"/>
<dbReference type="UniPathway" id="UPA00056">
    <property type="reaction ID" value="UER00094"/>
</dbReference>
<dbReference type="Proteomes" id="UP000001869">
    <property type="component" value="Chromosome"/>
</dbReference>
<dbReference type="GO" id="GO:0050515">
    <property type="term" value="F:4-(cytidine 5'-diphospho)-2-C-methyl-D-erythritol kinase activity"/>
    <property type="evidence" value="ECO:0007669"/>
    <property type="project" value="UniProtKB-UniRule"/>
</dbReference>
<dbReference type="GO" id="GO:0005524">
    <property type="term" value="F:ATP binding"/>
    <property type="evidence" value="ECO:0007669"/>
    <property type="project" value="UniProtKB-UniRule"/>
</dbReference>
<dbReference type="GO" id="GO:0019288">
    <property type="term" value="P:isopentenyl diphosphate biosynthetic process, methylerythritol 4-phosphate pathway"/>
    <property type="evidence" value="ECO:0007669"/>
    <property type="project" value="UniProtKB-UniRule"/>
</dbReference>
<dbReference type="GO" id="GO:0016114">
    <property type="term" value="P:terpenoid biosynthetic process"/>
    <property type="evidence" value="ECO:0007669"/>
    <property type="project" value="InterPro"/>
</dbReference>
<dbReference type="FunFam" id="3.30.230.10:FF:000022">
    <property type="entry name" value="4-diphosphocytidyl-2-C-methyl-D-erythritol kinase"/>
    <property type="match status" value="1"/>
</dbReference>
<dbReference type="FunFam" id="3.30.70.890:FF:000004">
    <property type="entry name" value="4-diphosphocytidyl-2-C-methyl-D-erythritol kinase"/>
    <property type="match status" value="1"/>
</dbReference>
<dbReference type="Gene3D" id="3.30.230.10">
    <property type="match status" value="1"/>
</dbReference>
<dbReference type="Gene3D" id="3.30.70.890">
    <property type="entry name" value="GHMP kinase, C-terminal domain"/>
    <property type="match status" value="1"/>
</dbReference>
<dbReference type="HAMAP" id="MF_00061">
    <property type="entry name" value="IspE"/>
    <property type="match status" value="1"/>
</dbReference>
<dbReference type="InterPro" id="IPR013750">
    <property type="entry name" value="GHMP_kinase_C_dom"/>
</dbReference>
<dbReference type="InterPro" id="IPR036554">
    <property type="entry name" value="GHMP_kinase_C_sf"/>
</dbReference>
<dbReference type="InterPro" id="IPR006204">
    <property type="entry name" value="GHMP_kinase_N_dom"/>
</dbReference>
<dbReference type="InterPro" id="IPR004424">
    <property type="entry name" value="IspE"/>
</dbReference>
<dbReference type="InterPro" id="IPR020568">
    <property type="entry name" value="Ribosomal_Su5_D2-typ_SF"/>
</dbReference>
<dbReference type="InterPro" id="IPR014721">
    <property type="entry name" value="Ribsml_uS5_D2-typ_fold_subgr"/>
</dbReference>
<dbReference type="NCBIfam" id="TIGR00154">
    <property type="entry name" value="ispE"/>
    <property type="match status" value="1"/>
</dbReference>
<dbReference type="PANTHER" id="PTHR43527">
    <property type="entry name" value="4-DIPHOSPHOCYTIDYL-2-C-METHYL-D-ERYTHRITOL KINASE, CHLOROPLASTIC"/>
    <property type="match status" value="1"/>
</dbReference>
<dbReference type="PANTHER" id="PTHR43527:SF2">
    <property type="entry name" value="4-DIPHOSPHOCYTIDYL-2-C-METHYL-D-ERYTHRITOL KINASE, CHLOROPLASTIC"/>
    <property type="match status" value="1"/>
</dbReference>
<dbReference type="Pfam" id="PF08544">
    <property type="entry name" value="GHMP_kinases_C"/>
    <property type="match status" value="1"/>
</dbReference>
<dbReference type="Pfam" id="PF00288">
    <property type="entry name" value="GHMP_kinases_N"/>
    <property type="match status" value="1"/>
</dbReference>
<dbReference type="PIRSF" id="PIRSF010376">
    <property type="entry name" value="IspE"/>
    <property type="match status" value="1"/>
</dbReference>
<dbReference type="SUPFAM" id="SSF55060">
    <property type="entry name" value="GHMP Kinase, C-terminal domain"/>
    <property type="match status" value="1"/>
</dbReference>
<dbReference type="SUPFAM" id="SSF54211">
    <property type="entry name" value="Ribosomal protein S5 domain 2-like"/>
    <property type="match status" value="1"/>
</dbReference>
<sequence>MTHWPSPAKLNLFLYITGQRADGYHTLQTLFQFLDYGDTLHIEPRRDGEIHLLTPVNGVENEDNLIVRAAQLLMKIASESGRLPAGSGADISIEKRLPMGGGLGGGSSNAATVLVALNHLWQCGLSIDELATLGLTLGADVPVFVRGHAAFAEGVGEILTPVNPPEKWYLVAHPGVSIPTPVIFKDPQLPRNTPKRSIDTLLKCEFSNDCEVIARKRFREVDAALSWLLEYAPSRLTGTGACVFAEFDTESCARQVLEQAPEWLNAFVAKGVNLSPLHRELL</sequence>
<accession>B5BI72</accession>
<protein>
    <recommendedName>
        <fullName evidence="1">4-diphosphocytidyl-2-C-methyl-D-erythritol kinase</fullName>
        <shortName evidence="1">CMK</shortName>
        <ecNumber evidence="1">2.7.1.148</ecNumber>
    </recommendedName>
    <alternativeName>
        <fullName evidence="1">4-(cytidine-5'-diphospho)-2-C-methyl-D-erythritol kinase</fullName>
    </alternativeName>
</protein>
<feature type="chain" id="PRO_1000092114" description="4-diphosphocytidyl-2-C-methyl-D-erythritol kinase">
    <location>
        <begin position="1"/>
        <end position="282"/>
    </location>
</feature>
<feature type="active site" evidence="1">
    <location>
        <position position="9"/>
    </location>
</feature>
<feature type="active site" evidence="1">
    <location>
        <position position="140"/>
    </location>
</feature>
<feature type="binding site" evidence="1">
    <location>
        <begin position="98"/>
        <end position="108"/>
    </location>
    <ligand>
        <name>ATP</name>
        <dbReference type="ChEBI" id="CHEBI:30616"/>
    </ligand>
</feature>
<evidence type="ECO:0000255" key="1">
    <source>
        <dbReference type="HAMAP-Rule" id="MF_00061"/>
    </source>
</evidence>
<reference key="1">
    <citation type="journal article" date="2009" name="BMC Genomics">
        <title>Pseudogene accumulation in the evolutionary histories of Salmonella enterica serovars Paratyphi A and Typhi.</title>
        <authorList>
            <person name="Holt K.E."/>
            <person name="Thomson N.R."/>
            <person name="Wain J."/>
            <person name="Langridge G.C."/>
            <person name="Hasan R."/>
            <person name="Bhutta Z.A."/>
            <person name="Quail M.A."/>
            <person name="Norbertczak H."/>
            <person name="Walker D."/>
            <person name="Simmonds M."/>
            <person name="White B."/>
            <person name="Bason N."/>
            <person name="Mungall K."/>
            <person name="Dougan G."/>
            <person name="Parkhill J."/>
        </authorList>
    </citation>
    <scope>NUCLEOTIDE SEQUENCE [LARGE SCALE GENOMIC DNA]</scope>
    <source>
        <strain>AKU_12601</strain>
    </source>
</reference>
<name>ISPE_SALPK</name>
<keyword id="KW-0067">ATP-binding</keyword>
<keyword id="KW-0414">Isoprene biosynthesis</keyword>
<keyword id="KW-0418">Kinase</keyword>
<keyword id="KW-0547">Nucleotide-binding</keyword>
<keyword id="KW-0808">Transferase</keyword>
<gene>
    <name evidence="1" type="primary">ispE</name>
    <name type="ordered locus">SSPA1021</name>
</gene>
<comment type="function">
    <text evidence="1">Catalyzes the phosphorylation of the position 2 hydroxy group of 4-diphosphocytidyl-2C-methyl-D-erythritol.</text>
</comment>
<comment type="catalytic activity">
    <reaction evidence="1">
        <text>4-CDP-2-C-methyl-D-erythritol + ATP = 4-CDP-2-C-methyl-D-erythritol 2-phosphate + ADP + H(+)</text>
        <dbReference type="Rhea" id="RHEA:18437"/>
        <dbReference type="ChEBI" id="CHEBI:15378"/>
        <dbReference type="ChEBI" id="CHEBI:30616"/>
        <dbReference type="ChEBI" id="CHEBI:57823"/>
        <dbReference type="ChEBI" id="CHEBI:57919"/>
        <dbReference type="ChEBI" id="CHEBI:456216"/>
        <dbReference type="EC" id="2.7.1.148"/>
    </reaction>
</comment>
<comment type="pathway">
    <text evidence="1">Isoprenoid biosynthesis; isopentenyl diphosphate biosynthesis via DXP pathway; isopentenyl diphosphate from 1-deoxy-D-xylulose 5-phosphate: step 3/6.</text>
</comment>
<comment type="subunit">
    <text evidence="1">Homodimer.</text>
</comment>
<comment type="similarity">
    <text evidence="1">Belongs to the GHMP kinase family. IspE subfamily.</text>
</comment>
<proteinExistence type="inferred from homology"/>
<organism>
    <name type="scientific">Salmonella paratyphi A (strain AKU_12601)</name>
    <dbReference type="NCBI Taxonomy" id="554290"/>
    <lineage>
        <taxon>Bacteria</taxon>
        <taxon>Pseudomonadati</taxon>
        <taxon>Pseudomonadota</taxon>
        <taxon>Gammaproteobacteria</taxon>
        <taxon>Enterobacterales</taxon>
        <taxon>Enterobacteriaceae</taxon>
        <taxon>Salmonella</taxon>
    </lineage>
</organism>